<sequence length="355" mass="37426">MAQPTFFQSPPPMTLAAIAAKAKAELADVSQGDKVIKGLAALDEAGPMHLAFFDNLKYADQLARTNAGACLVSPRFEARVPGHVVVVRANQPFRAFVQLAREFHADALRPQPWFGDDGISPQAIIDPTARLEDGVIVEPLAVIGAHVEIGAGTIVGAGAVIGPHVKVGRDCNVGARTVIQCSLIGNDVLIHPGCSIGQDGYGFIFFGANGHTKVPQTGRVIIQNHVEVGAGTTIDRGSLRDTVIGEGTKIDNQVQIGHNVTIGRHCLLAAQIGLAGSLTIGDNVALGAKVGINNHLTIGDGAQVTAMSGVKDDIPPNGRWGGFFAKPTKQWFREIVAVERLVRDQTATSRDEGRE</sequence>
<name>LPXD_BRASO</name>
<comment type="function">
    <text evidence="1">Catalyzes the N-acylation of UDP-3-O-acylglucosamine using 3-hydroxyacyl-ACP as the acyl donor. Is involved in the biosynthesis of lipid A, a phosphorylated glycolipid that anchors the lipopolysaccharide to the outer membrane of the cell.</text>
</comment>
<comment type="catalytic activity">
    <reaction evidence="1">
        <text>a UDP-3-O-[(3R)-3-hydroxyacyl]-alpha-D-glucosamine + a (3R)-hydroxyacyl-[ACP] = a UDP-2-N,3-O-bis[(3R)-3-hydroxyacyl]-alpha-D-glucosamine + holo-[ACP] + H(+)</text>
        <dbReference type="Rhea" id="RHEA:53836"/>
        <dbReference type="Rhea" id="RHEA-COMP:9685"/>
        <dbReference type="Rhea" id="RHEA-COMP:9945"/>
        <dbReference type="ChEBI" id="CHEBI:15378"/>
        <dbReference type="ChEBI" id="CHEBI:64479"/>
        <dbReference type="ChEBI" id="CHEBI:78827"/>
        <dbReference type="ChEBI" id="CHEBI:137740"/>
        <dbReference type="ChEBI" id="CHEBI:137748"/>
        <dbReference type="EC" id="2.3.1.191"/>
    </reaction>
</comment>
<comment type="pathway">
    <text evidence="1">Bacterial outer membrane biogenesis; LPS lipid A biosynthesis.</text>
</comment>
<comment type="subunit">
    <text evidence="1">Homotrimer.</text>
</comment>
<comment type="similarity">
    <text evidence="1">Belongs to the transferase hexapeptide repeat family. LpxD subfamily.</text>
</comment>
<protein>
    <recommendedName>
        <fullName evidence="1">UDP-3-O-acylglucosamine N-acyltransferase</fullName>
        <ecNumber evidence="1">2.3.1.191</ecNumber>
    </recommendedName>
</protein>
<gene>
    <name evidence="1" type="primary">lpxD</name>
    <name type="ordered locus">BRADO4131</name>
</gene>
<keyword id="KW-0012">Acyltransferase</keyword>
<keyword id="KW-0441">Lipid A biosynthesis</keyword>
<keyword id="KW-0444">Lipid biosynthesis</keyword>
<keyword id="KW-0443">Lipid metabolism</keyword>
<keyword id="KW-1185">Reference proteome</keyword>
<keyword id="KW-0677">Repeat</keyword>
<keyword id="KW-0808">Transferase</keyword>
<accession>A4YVF7</accession>
<organism>
    <name type="scientific">Bradyrhizobium sp. (strain ORS 278)</name>
    <dbReference type="NCBI Taxonomy" id="114615"/>
    <lineage>
        <taxon>Bacteria</taxon>
        <taxon>Pseudomonadati</taxon>
        <taxon>Pseudomonadota</taxon>
        <taxon>Alphaproteobacteria</taxon>
        <taxon>Hyphomicrobiales</taxon>
        <taxon>Nitrobacteraceae</taxon>
        <taxon>Bradyrhizobium</taxon>
    </lineage>
</organism>
<reference key="1">
    <citation type="journal article" date="2007" name="Science">
        <title>Legumes symbioses: absence of nod genes in photosynthetic bradyrhizobia.</title>
        <authorList>
            <person name="Giraud E."/>
            <person name="Moulin L."/>
            <person name="Vallenet D."/>
            <person name="Barbe V."/>
            <person name="Cytryn E."/>
            <person name="Avarre J.-C."/>
            <person name="Jaubert M."/>
            <person name="Simon D."/>
            <person name="Cartieaux F."/>
            <person name="Prin Y."/>
            <person name="Bena G."/>
            <person name="Hannibal L."/>
            <person name="Fardoux J."/>
            <person name="Kojadinovic M."/>
            <person name="Vuillet L."/>
            <person name="Lajus A."/>
            <person name="Cruveiller S."/>
            <person name="Rouy Z."/>
            <person name="Mangenot S."/>
            <person name="Segurens B."/>
            <person name="Dossat C."/>
            <person name="Franck W.L."/>
            <person name="Chang W.-S."/>
            <person name="Saunders E."/>
            <person name="Bruce D."/>
            <person name="Richardson P."/>
            <person name="Normand P."/>
            <person name="Dreyfus B."/>
            <person name="Pignol D."/>
            <person name="Stacey G."/>
            <person name="Emerich D."/>
            <person name="Vermeglio A."/>
            <person name="Medigue C."/>
            <person name="Sadowsky M."/>
        </authorList>
    </citation>
    <scope>NUCLEOTIDE SEQUENCE [LARGE SCALE GENOMIC DNA]</scope>
    <source>
        <strain>ORS 278</strain>
    </source>
</reference>
<proteinExistence type="inferred from homology"/>
<feature type="chain" id="PRO_1000050927" description="UDP-3-O-acylglucosamine N-acyltransferase">
    <location>
        <begin position="1"/>
        <end position="355"/>
    </location>
</feature>
<feature type="active site" description="Proton acceptor" evidence="1">
    <location>
        <position position="258"/>
    </location>
</feature>
<dbReference type="EC" id="2.3.1.191" evidence="1"/>
<dbReference type="EMBL" id="CU234118">
    <property type="protein sequence ID" value="CAL77883.1"/>
    <property type="molecule type" value="Genomic_DNA"/>
</dbReference>
<dbReference type="RefSeq" id="WP_011927011.1">
    <property type="nucleotide sequence ID" value="NC_009445.1"/>
</dbReference>
<dbReference type="SMR" id="A4YVF7"/>
<dbReference type="STRING" id="114615.BRADO4131"/>
<dbReference type="KEGG" id="bra:BRADO4131"/>
<dbReference type="eggNOG" id="COG1044">
    <property type="taxonomic scope" value="Bacteria"/>
</dbReference>
<dbReference type="HOGENOM" id="CLU_049865_0_2_5"/>
<dbReference type="OrthoDB" id="9784739at2"/>
<dbReference type="UniPathway" id="UPA00973"/>
<dbReference type="Proteomes" id="UP000001994">
    <property type="component" value="Chromosome"/>
</dbReference>
<dbReference type="GO" id="GO:0016020">
    <property type="term" value="C:membrane"/>
    <property type="evidence" value="ECO:0007669"/>
    <property type="project" value="GOC"/>
</dbReference>
<dbReference type="GO" id="GO:0016410">
    <property type="term" value="F:N-acyltransferase activity"/>
    <property type="evidence" value="ECO:0007669"/>
    <property type="project" value="InterPro"/>
</dbReference>
<dbReference type="GO" id="GO:0009245">
    <property type="term" value="P:lipid A biosynthetic process"/>
    <property type="evidence" value="ECO:0007669"/>
    <property type="project" value="UniProtKB-UniRule"/>
</dbReference>
<dbReference type="CDD" id="cd03352">
    <property type="entry name" value="LbH_LpxD"/>
    <property type="match status" value="1"/>
</dbReference>
<dbReference type="Gene3D" id="2.160.10.10">
    <property type="entry name" value="Hexapeptide repeat proteins"/>
    <property type="match status" value="1"/>
</dbReference>
<dbReference type="Gene3D" id="3.40.1390.10">
    <property type="entry name" value="MurE/MurF, N-terminal domain"/>
    <property type="match status" value="1"/>
</dbReference>
<dbReference type="HAMAP" id="MF_00523">
    <property type="entry name" value="LpxD"/>
    <property type="match status" value="1"/>
</dbReference>
<dbReference type="InterPro" id="IPR001451">
    <property type="entry name" value="Hexapep"/>
</dbReference>
<dbReference type="InterPro" id="IPR018357">
    <property type="entry name" value="Hexapep_transf_CS"/>
</dbReference>
<dbReference type="InterPro" id="IPR007691">
    <property type="entry name" value="LpxD"/>
</dbReference>
<dbReference type="InterPro" id="IPR011004">
    <property type="entry name" value="Trimer_LpxA-like_sf"/>
</dbReference>
<dbReference type="InterPro" id="IPR020573">
    <property type="entry name" value="UDP_GlcNAc_AcTrfase_non-rep"/>
</dbReference>
<dbReference type="NCBIfam" id="TIGR01853">
    <property type="entry name" value="lipid_A_lpxD"/>
    <property type="match status" value="1"/>
</dbReference>
<dbReference type="NCBIfam" id="NF002060">
    <property type="entry name" value="PRK00892.1"/>
    <property type="match status" value="1"/>
</dbReference>
<dbReference type="PANTHER" id="PTHR43378">
    <property type="entry name" value="UDP-3-O-ACYLGLUCOSAMINE N-ACYLTRANSFERASE"/>
    <property type="match status" value="1"/>
</dbReference>
<dbReference type="PANTHER" id="PTHR43378:SF2">
    <property type="entry name" value="UDP-3-O-ACYLGLUCOSAMINE N-ACYLTRANSFERASE 1, MITOCHONDRIAL-RELATED"/>
    <property type="match status" value="1"/>
</dbReference>
<dbReference type="Pfam" id="PF00132">
    <property type="entry name" value="Hexapep"/>
    <property type="match status" value="2"/>
</dbReference>
<dbReference type="Pfam" id="PF14602">
    <property type="entry name" value="Hexapep_2"/>
    <property type="match status" value="2"/>
</dbReference>
<dbReference type="Pfam" id="PF04613">
    <property type="entry name" value="LpxD"/>
    <property type="match status" value="1"/>
</dbReference>
<dbReference type="SUPFAM" id="SSF51161">
    <property type="entry name" value="Trimeric LpxA-like enzymes"/>
    <property type="match status" value="1"/>
</dbReference>
<dbReference type="PROSITE" id="PS00101">
    <property type="entry name" value="HEXAPEP_TRANSFERASES"/>
    <property type="match status" value="1"/>
</dbReference>
<evidence type="ECO:0000255" key="1">
    <source>
        <dbReference type="HAMAP-Rule" id="MF_00523"/>
    </source>
</evidence>